<proteinExistence type="evidence at protein level"/>
<gene>
    <name type="ORF">SPAC7D4.14c</name>
</gene>
<dbReference type="EMBL" id="CU329670">
    <property type="protein sequence ID" value="CAB16731.1"/>
    <property type="molecule type" value="Genomic_DNA"/>
</dbReference>
<dbReference type="PIR" id="T39092">
    <property type="entry name" value="T39092"/>
</dbReference>
<dbReference type="PDB" id="7QUU">
    <property type="method" value="NMR"/>
    <property type="chains" value="A=2-44"/>
</dbReference>
<dbReference type="PDBsum" id="7QUU"/>
<dbReference type="SMR" id="O14269"/>
<dbReference type="BioGRID" id="278151">
    <property type="interactions" value="26"/>
</dbReference>
<dbReference type="FunCoup" id="O14269">
    <property type="interactions" value="19"/>
</dbReference>
<dbReference type="IntAct" id="O14269">
    <property type="interactions" value="4"/>
</dbReference>
<dbReference type="STRING" id="284812.O14269"/>
<dbReference type="iPTMnet" id="O14269"/>
<dbReference type="PaxDb" id="4896-SPAC7D4.14c.1"/>
<dbReference type="EnsemblFungi" id="SPAC7D4.14c.1">
    <property type="protein sequence ID" value="SPAC7D4.14c.1:pep"/>
    <property type="gene ID" value="SPAC7D4.14c"/>
</dbReference>
<dbReference type="KEGG" id="spo:2541655"/>
<dbReference type="PomBase" id="SPAC7D4.14c"/>
<dbReference type="VEuPathDB" id="FungiDB:SPAC7D4.14c"/>
<dbReference type="HOGENOM" id="CLU_515967_0_0_1"/>
<dbReference type="InParanoid" id="O14269"/>
<dbReference type="OMA" id="YHHRMRS"/>
<dbReference type="PRO" id="PR:O14269"/>
<dbReference type="Proteomes" id="UP000002485">
    <property type="component" value="Chromosome I"/>
</dbReference>
<dbReference type="GO" id="GO:0000785">
    <property type="term" value="C:chromatin"/>
    <property type="evidence" value="ECO:0000314"/>
    <property type="project" value="PomBase"/>
</dbReference>
<dbReference type="GO" id="GO:1990477">
    <property type="term" value="C:MTREC complex"/>
    <property type="evidence" value="ECO:0000314"/>
    <property type="project" value="PomBase"/>
</dbReference>
<dbReference type="GO" id="GO:0016604">
    <property type="term" value="C:nuclear body"/>
    <property type="evidence" value="ECO:0000314"/>
    <property type="project" value="PomBase"/>
</dbReference>
<dbReference type="GO" id="GO:1990251">
    <property type="term" value="C:nuclear exosome focus"/>
    <property type="evidence" value="ECO:0000314"/>
    <property type="project" value="PomBase"/>
</dbReference>
<dbReference type="GO" id="GO:0033621">
    <property type="term" value="P:nuclear mRNA surveillance of meiosis-specific transcripts"/>
    <property type="evidence" value="ECO:0000315"/>
    <property type="project" value="PomBase"/>
</dbReference>
<dbReference type="GO" id="GO:1902794">
    <property type="term" value="P:siRNA-independent facultative heterochromatin formation"/>
    <property type="evidence" value="ECO:0000315"/>
    <property type="project" value="PomBase"/>
</dbReference>
<organism>
    <name type="scientific">Schizosaccharomyces pombe (strain 972 / ATCC 24843)</name>
    <name type="common">Fission yeast</name>
    <dbReference type="NCBI Taxonomy" id="284812"/>
    <lineage>
        <taxon>Eukaryota</taxon>
        <taxon>Fungi</taxon>
        <taxon>Dikarya</taxon>
        <taxon>Ascomycota</taxon>
        <taxon>Taphrinomycotina</taxon>
        <taxon>Schizosaccharomycetes</taxon>
        <taxon>Schizosaccharomycetales</taxon>
        <taxon>Schizosaccharomycetaceae</taxon>
        <taxon>Schizosaccharomyces</taxon>
    </lineage>
</organism>
<feature type="chain" id="PRO_0000304073" description="Uncharacterized protein C7D4.14c">
    <location>
        <begin position="1"/>
        <end position="551"/>
    </location>
</feature>
<feature type="region of interest" description="Disordered" evidence="1">
    <location>
        <begin position="66"/>
        <end position="111"/>
    </location>
</feature>
<feature type="region of interest" description="Disordered" evidence="1">
    <location>
        <begin position="130"/>
        <end position="165"/>
    </location>
</feature>
<feature type="region of interest" description="Disordered" evidence="1">
    <location>
        <begin position="180"/>
        <end position="229"/>
    </location>
</feature>
<feature type="region of interest" description="Disordered" evidence="1">
    <location>
        <begin position="277"/>
        <end position="303"/>
    </location>
</feature>
<feature type="compositionally biased region" description="Polar residues" evidence="1">
    <location>
        <begin position="92"/>
        <end position="111"/>
    </location>
</feature>
<feature type="compositionally biased region" description="Polar residues" evidence="1">
    <location>
        <begin position="143"/>
        <end position="156"/>
    </location>
</feature>
<feature type="compositionally biased region" description="Low complexity" evidence="1">
    <location>
        <begin position="182"/>
        <end position="193"/>
    </location>
</feature>
<feature type="compositionally biased region" description="Polar residues" evidence="1">
    <location>
        <begin position="204"/>
        <end position="226"/>
    </location>
</feature>
<feature type="compositionally biased region" description="Low complexity" evidence="1">
    <location>
        <begin position="290"/>
        <end position="299"/>
    </location>
</feature>
<feature type="modified residue" description="Phosphoserine" evidence="2">
    <location>
        <position position="74"/>
    </location>
</feature>
<feature type="helix" evidence="3">
    <location>
        <begin position="7"/>
        <end position="24"/>
    </location>
</feature>
<feature type="helix" evidence="3">
    <location>
        <begin position="34"/>
        <end position="43"/>
    </location>
</feature>
<sequence length="551" mass="62591">MDAVEPSVEKEYKKIISFRDTVFEGKHQQFLVPNNVRLKFLRDRLHKSLKNFDSVKRKVEIANDEGNNKLLKSSPKAQTRDENTPSEFKNGGFSNRESMSENCFSKSSTNLPRLDINRDFNSLLNSQTKPEATGLMKEDITPVVNTSKQSSTGTQEESSKPEKSNKLLAKSTLSLYGNQAFNPSSVLPSNSSSTPKENKKNVNKETYQPNTFRRSPLKNDTGSVELSNLYMPSPPSSALPVSLVSAPSPPRATNVAVPCLKHLESSEQGNNLLINKAFTSPRLPSPPQSTRPSSTRFPSVPLSDEKNSIVSVKNEEPSVILGNQSPISDLHPYSPSWIPYPKELQSLQVNRIPELSLENNVMSTRDYKDIMPHPRPSAVLLDKPVSLDQTSHPFPHQNTYILPPGIRNSVDYDGTFLSRKSLPPYNGIHRLHESPSQFSNQSRYNWEPILENRSLLHLNRPPPIETHYSYESNNSSFSPYYHKRHRQISPYYPTSSVYGVYESPPHMSDSRISRQHMPLTHTTYEPSAPYYNDYELAEEIERRRHHSFYDY</sequence>
<accession>O14269</accession>
<evidence type="ECO:0000256" key="1">
    <source>
        <dbReference type="SAM" id="MobiDB-lite"/>
    </source>
</evidence>
<evidence type="ECO:0000269" key="2">
    <source>
    </source>
</evidence>
<evidence type="ECO:0007829" key="3">
    <source>
        <dbReference type="PDB" id="7QUU"/>
    </source>
</evidence>
<reference key="1">
    <citation type="journal article" date="2002" name="Nature">
        <title>The genome sequence of Schizosaccharomyces pombe.</title>
        <authorList>
            <person name="Wood V."/>
            <person name="Gwilliam R."/>
            <person name="Rajandream M.A."/>
            <person name="Lyne M.H."/>
            <person name="Lyne R."/>
            <person name="Stewart A."/>
            <person name="Sgouros J.G."/>
            <person name="Peat N."/>
            <person name="Hayles J."/>
            <person name="Baker S.G."/>
            <person name="Basham D."/>
            <person name="Bowman S."/>
            <person name="Brooks K."/>
            <person name="Brown D."/>
            <person name="Brown S."/>
            <person name="Chillingworth T."/>
            <person name="Churcher C.M."/>
            <person name="Collins M."/>
            <person name="Connor R."/>
            <person name="Cronin A."/>
            <person name="Davis P."/>
            <person name="Feltwell T."/>
            <person name="Fraser A."/>
            <person name="Gentles S."/>
            <person name="Goble A."/>
            <person name="Hamlin N."/>
            <person name="Harris D.E."/>
            <person name="Hidalgo J."/>
            <person name="Hodgson G."/>
            <person name="Holroyd S."/>
            <person name="Hornsby T."/>
            <person name="Howarth S."/>
            <person name="Huckle E.J."/>
            <person name="Hunt S."/>
            <person name="Jagels K."/>
            <person name="James K.D."/>
            <person name="Jones L."/>
            <person name="Jones M."/>
            <person name="Leather S."/>
            <person name="McDonald S."/>
            <person name="McLean J."/>
            <person name="Mooney P."/>
            <person name="Moule S."/>
            <person name="Mungall K.L."/>
            <person name="Murphy L.D."/>
            <person name="Niblett D."/>
            <person name="Odell C."/>
            <person name="Oliver K."/>
            <person name="O'Neil S."/>
            <person name="Pearson D."/>
            <person name="Quail M.A."/>
            <person name="Rabbinowitsch E."/>
            <person name="Rutherford K.M."/>
            <person name="Rutter S."/>
            <person name="Saunders D."/>
            <person name="Seeger K."/>
            <person name="Sharp S."/>
            <person name="Skelton J."/>
            <person name="Simmonds M.N."/>
            <person name="Squares R."/>
            <person name="Squares S."/>
            <person name="Stevens K."/>
            <person name="Taylor K."/>
            <person name="Taylor R.G."/>
            <person name="Tivey A."/>
            <person name="Walsh S.V."/>
            <person name="Warren T."/>
            <person name="Whitehead S."/>
            <person name="Woodward J.R."/>
            <person name="Volckaert G."/>
            <person name="Aert R."/>
            <person name="Robben J."/>
            <person name="Grymonprez B."/>
            <person name="Weltjens I."/>
            <person name="Vanstreels E."/>
            <person name="Rieger M."/>
            <person name="Schaefer M."/>
            <person name="Mueller-Auer S."/>
            <person name="Gabel C."/>
            <person name="Fuchs M."/>
            <person name="Duesterhoeft A."/>
            <person name="Fritzc C."/>
            <person name="Holzer E."/>
            <person name="Moestl D."/>
            <person name="Hilbert H."/>
            <person name="Borzym K."/>
            <person name="Langer I."/>
            <person name="Beck A."/>
            <person name="Lehrach H."/>
            <person name="Reinhardt R."/>
            <person name="Pohl T.M."/>
            <person name="Eger P."/>
            <person name="Zimmermann W."/>
            <person name="Wedler H."/>
            <person name="Wambutt R."/>
            <person name="Purnelle B."/>
            <person name="Goffeau A."/>
            <person name="Cadieu E."/>
            <person name="Dreano S."/>
            <person name="Gloux S."/>
            <person name="Lelaure V."/>
            <person name="Mottier S."/>
            <person name="Galibert F."/>
            <person name="Aves S.J."/>
            <person name="Xiang Z."/>
            <person name="Hunt C."/>
            <person name="Moore K."/>
            <person name="Hurst S.M."/>
            <person name="Lucas M."/>
            <person name="Rochet M."/>
            <person name="Gaillardin C."/>
            <person name="Tallada V.A."/>
            <person name="Garzon A."/>
            <person name="Thode G."/>
            <person name="Daga R.R."/>
            <person name="Cruzado L."/>
            <person name="Jimenez J."/>
            <person name="Sanchez M."/>
            <person name="del Rey F."/>
            <person name="Benito J."/>
            <person name="Dominguez A."/>
            <person name="Revuelta J.L."/>
            <person name="Moreno S."/>
            <person name="Armstrong J."/>
            <person name="Forsburg S.L."/>
            <person name="Cerutti L."/>
            <person name="Lowe T."/>
            <person name="McCombie W.R."/>
            <person name="Paulsen I."/>
            <person name="Potashkin J."/>
            <person name="Shpakovski G.V."/>
            <person name="Ussery D."/>
            <person name="Barrell B.G."/>
            <person name="Nurse P."/>
        </authorList>
    </citation>
    <scope>NUCLEOTIDE SEQUENCE [LARGE SCALE GENOMIC DNA]</scope>
    <source>
        <strain>972 / ATCC 24843</strain>
    </source>
</reference>
<reference key="2">
    <citation type="journal article" date="2008" name="J. Proteome Res.">
        <title>Phosphoproteome analysis of fission yeast.</title>
        <authorList>
            <person name="Wilson-Grady J.T."/>
            <person name="Villen J."/>
            <person name="Gygi S.P."/>
        </authorList>
    </citation>
    <scope>PHOSPHORYLATION [LARGE SCALE ANALYSIS] AT SER-74</scope>
    <scope>IDENTIFICATION BY MASS SPECTROMETRY</scope>
</reference>
<name>YFPE_SCHPO</name>
<protein>
    <recommendedName>
        <fullName>Uncharacterized protein C7D4.14c</fullName>
    </recommendedName>
</protein>
<comment type="interaction">
    <interactant intactId="EBI-8993923">
        <id>O14269</id>
    </interactant>
    <interactant intactId="EBI-1117407">
        <id>Q9UTR8</id>
        <label>red1</label>
    </interactant>
    <organismsDiffer>false</organismsDiffer>
    <experiments>3</experiments>
</comment>
<keyword id="KW-0002">3D-structure</keyword>
<keyword id="KW-0597">Phosphoprotein</keyword>
<keyword id="KW-1185">Reference proteome</keyword>